<organism>
    <name type="scientific">Pseudomonas putida</name>
    <name type="common">Arthrobacter siderocapsulatus</name>
    <dbReference type="NCBI Taxonomy" id="303"/>
    <lineage>
        <taxon>Bacteria</taxon>
        <taxon>Pseudomonadati</taxon>
        <taxon>Pseudomonadota</taxon>
        <taxon>Gammaproteobacteria</taxon>
        <taxon>Pseudomonadales</taxon>
        <taxon>Pseudomonadaceae</taxon>
        <taxon>Pseudomonas</taxon>
    </lineage>
</organism>
<feature type="chain" id="PRO_0000162459" description="Regulatory protein RecX">
    <location>
        <begin position="1"/>
        <end position="142"/>
    </location>
</feature>
<feature type="region of interest" description="Disordered" evidence="2">
    <location>
        <begin position="118"/>
        <end position="142"/>
    </location>
</feature>
<sequence>MSAVLDTPVAIRRTAMDLLARREHGRVELTRKLRQRGASDELIEPELDRLAEEGLLSEARYLESFIRYRSGSGYGPARIREELGQRGLARADIEQALRESEVDWAERMRDVWQRKFAGQRPQDRAAVPSRPDFSLTGASPWI</sequence>
<keyword id="KW-0963">Cytoplasm</keyword>
<comment type="function">
    <text evidence="1">Modulates RecA activity.</text>
</comment>
<comment type="subcellular location">
    <subcellularLocation>
        <location evidence="3">Cytoplasm</location>
    </subcellularLocation>
</comment>
<comment type="similarity">
    <text evidence="3">Belongs to the RecX family.</text>
</comment>
<evidence type="ECO:0000250" key="1"/>
<evidence type="ECO:0000256" key="2">
    <source>
        <dbReference type="SAM" id="MobiDB-lite"/>
    </source>
</evidence>
<evidence type="ECO:0000305" key="3"/>
<proteinExistence type="inferred from homology"/>
<protein>
    <recommendedName>
        <fullName>Regulatory protein RecX</fullName>
    </recommendedName>
</protein>
<reference key="1">
    <citation type="submission" date="1996-10" db="EMBL/GenBank/DDBJ databases">
        <title>Cloning, DNA sequencing, and characterization of the Pseudomonas putida PpS145 recA gene, recA-associated gene and recA region.</title>
        <authorList>
            <person name="Yan M."/>
            <person name="McBeth D.L."/>
        </authorList>
    </citation>
    <scope>NUCLEOTIDE SEQUENCE [GENOMIC DNA]</scope>
    <source>
        <strain>PPS145</strain>
    </source>
</reference>
<reference key="2">
    <citation type="journal article" date="1993" name="Gene">
        <title>Construction of chromosomal recA mutants of Pseudomonas putida PpG2.</title>
        <authorList>
            <person name="Luo J."/>
            <person name="Burns G."/>
            <person name="Sokatch J.R."/>
        </authorList>
    </citation>
    <scope>NUCLEOTIDE SEQUENCE [GENOMIC DNA] OF 1-64</scope>
    <source>
        <strain>G2</strain>
    </source>
</reference>
<reference key="3">
    <citation type="journal article" date="1994" name="Nucleic Acids Res.">
        <title>A putative regulatory gene downstream of recA is conserved in Gram-negative and Gram-positive bacteria.</title>
        <authorList>
            <person name="de Mot R."/>
            <person name="Schoofs G."/>
            <person name="Vanderleyden J."/>
        </authorList>
    </citation>
    <scope>SIMILARITY</scope>
</reference>
<dbReference type="EMBL" id="U70864">
    <property type="protein sequence ID" value="AAB16922.1"/>
    <property type="molecule type" value="Genomic_DNA"/>
</dbReference>
<dbReference type="EMBL" id="L12684">
    <property type="protein sequence ID" value="AAC36873.2"/>
    <property type="molecule type" value="Genomic_DNA"/>
</dbReference>
<dbReference type="PIR" id="T10483">
    <property type="entry name" value="T10483"/>
</dbReference>
<dbReference type="SMR" id="P37862"/>
<dbReference type="GO" id="GO:0005737">
    <property type="term" value="C:cytoplasm"/>
    <property type="evidence" value="ECO:0007669"/>
    <property type="project" value="UniProtKB-SubCell"/>
</dbReference>
<dbReference type="GO" id="GO:0006282">
    <property type="term" value="P:regulation of DNA repair"/>
    <property type="evidence" value="ECO:0007669"/>
    <property type="project" value="InterPro"/>
</dbReference>
<dbReference type="Gene3D" id="1.10.10.10">
    <property type="entry name" value="Winged helix-like DNA-binding domain superfamily/Winged helix DNA-binding domain"/>
    <property type="match status" value="2"/>
</dbReference>
<dbReference type="InterPro" id="IPR053926">
    <property type="entry name" value="RecX_HTH_1st"/>
</dbReference>
<dbReference type="InterPro" id="IPR053924">
    <property type="entry name" value="RecX_HTH_2nd"/>
</dbReference>
<dbReference type="InterPro" id="IPR003783">
    <property type="entry name" value="Regulatory_RecX"/>
</dbReference>
<dbReference type="InterPro" id="IPR036388">
    <property type="entry name" value="WH-like_DNA-bd_sf"/>
</dbReference>
<dbReference type="NCBIfam" id="NF001054">
    <property type="entry name" value="PRK00117.2-1"/>
    <property type="match status" value="1"/>
</dbReference>
<dbReference type="PANTHER" id="PTHR33602">
    <property type="entry name" value="REGULATORY PROTEIN RECX FAMILY PROTEIN"/>
    <property type="match status" value="1"/>
</dbReference>
<dbReference type="PANTHER" id="PTHR33602:SF1">
    <property type="entry name" value="REGULATORY PROTEIN RECX FAMILY PROTEIN"/>
    <property type="match status" value="1"/>
</dbReference>
<dbReference type="Pfam" id="PF21982">
    <property type="entry name" value="RecX_HTH1"/>
    <property type="match status" value="1"/>
</dbReference>
<dbReference type="Pfam" id="PF02631">
    <property type="entry name" value="RecX_HTH2"/>
    <property type="match status" value="1"/>
</dbReference>
<name>RECX_PSEPU</name>
<accession>P37862</accession>
<gene>
    <name type="primary">recX</name>
</gene>